<dbReference type="EC" id="4.1.1.19" evidence="17"/>
<dbReference type="EMBL" id="AF009647">
    <property type="protein sequence ID" value="AAB72179.1"/>
    <property type="molecule type" value="mRNA"/>
</dbReference>
<dbReference type="EMBL" id="AL023094">
    <property type="protein sequence ID" value="CAA18850.1"/>
    <property type="molecule type" value="Genomic_DNA"/>
</dbReference>
<dbReference type="EMBL" id="AL161586">
    <property type="protein sequence ID" value="CAB80188.1"/>
    <property type="molecule type" value="Genomic_DNA"/>
</dbReference>
<dbReference type="EMBL" id="CP002687">
    <property type="protein sequence ID" value="AEE86413.1"/>
    <property type="molecule type" value="Genomic_DNA"/>
</dbReference>
<dbReference type="EMBL" id="CP002687">
    <property type="protein sequence ID" value="AEE86414.1"/>
    <property type="molecule type" value="Genomic_DNA"/>
</dbReference>
<dbReference type="EMBL" id="AY039581">
    <property type="protein sequence ID" value="AAK62636.1"/>
    <property type="molecule type" value="mRNA"/>
</dbReference>
<dbReference type="EMBL" id="AY057553">
    <property type="protein sequence ID" value="AAL09792.1"/>
    <property type="molecule type" value="mRNA"/>
</dbReference>
<dbReference type="EMBL" id="AY093982">
    <property type="protein sequence ID" value="AAM16243.1"/>
    <property type="molecule type" value="mRNA"/>
</dbReference>
<dbReference type="EMBL" id="BT000682">
    <property type="protein sequence ID" value="AAN31828.1"/>
    <property type="molecule type" value="mRNA"/>
</dbReference>
<dbReference type="PIR" id="T05291">
    <property type="entry name" value="T05291"/>
</dbReference>
<dbReference type="RefSeq" id="NP_195197.1">
    <property type="nucleotide sequence ID" value="NM_119637.3"/>
</dbReference>
<dbReference type="RefSeq" id="NP_974684.1">
    <property type="nucleotide sequence ID" value="NM_202955.1"/>
</dbReference>
<dbReference type="SMR" id="O23141"/>
<dbReference type="BioGRID" id="14905">
    <property type="interactions" value="1"/>
</dbReference>
<dbReference type="FunCoup" id="O23141">
    <property type="interactions" value="16"/>
</dbReference>
<dbReference type="IntAct" id="O23141">
    <property type="interactions" value="1"/>
</dbReference>
<dbReference type="STRING" id="3702.O23141"/>
<dbReference type="iPTMnet" id="O23141"/>
<dbReference type="PaxDb" id="3702-AT4G34710.1"/>
<dbReference type="ProteomicsDB" id="245334"/>
<dbReference type="EnsemblPlants" id="AT4G34710.1">
    <property type="protein sequence ID" value="AT4G34710.1"/>
    <property type="gene ID" value="AT4G34710"/>
</dbReference>
<dbReference type="EnsemblPlants" id="AT4G34710.2">
    <property type="protein sequence ID" value="AT4G34710.2"/>
    <property type="gene ID" value="AT4G34710"/>
</dbReference>
<dbReference type="GeneID" id="829623"/>
<dbReference type="Gramene" id="AT4G34710.1">
    <property type="protein sequence ID" value="AT4G34710.1"/>
    <property type="gene ID" value="AT4G34710"/>
</dbReference>
<dbReference type="Gramene" id="AT4G34710.2">
    <property type="protein sequence ID" value="AT4G34710.2"/>
    <property type="gene ID" value="AT4G34710"/>
</dbReference>
<dbReference type="KEGG" id="ath:AT4G34710"/>
<dbReference type="Araport" id="AT4G34710"/>
<dbReference type="TAIR" id="AT4G34710">
    <property type="gene designation" value="ADC2"/>
</dbReference>
<dbReference type="eggNOG" id="ENOG502QTXD">
    <property type="taxonomic scope" value="Eukaryota"/>
</dbReference>
<dbReference type="HOGENOM" id="CLU_027243_0_0_1"/>
<dbReference type="InParanoid" id="O23141"/>
<dbReference type="OMA" id="AVEYTQH"/>
<dbReference type="OrthoDB" id="3717802at2759"/>
<dbReference type="PhylomeDB" id="O23141"/>
<dbReference type="BioCyc" id="ARA:AT4G34710-MONOMER"/>
<dbReference type="BRENDA" id="4.1.1.19">
    <property type="organism ID" value="399"/>
</dbReference>
<dbReference type="UniPathway" id="UPA00186">
    <property type="reaction ID" value="UER00284"/>
</dbReference>
<dbReference type="PRO" id="PR:O23141"/>
<dbReference type="Proteomes" id="UP000006548">
    <property type="component" value="Chromosome 4"/>
</dbReference>
<dbReference type="ExpressionAtlas" id="O23141">
    <property type="expression patterns" value="baseline and differential"/>
</dbReference>
<dbReference type="GO" id="GO:0009507">
    <property type="term" value="C:chloroplast"/>
    <property type="evidence" value="ECO:0000314"/>
    <property type="project" value="UniProtKB"/>
</dbReference>
<dbReference type="GO" id="GO:0005829">
    <property type="term" value="C:cytosol"/>
    <property type="evidence" value="ECO:0000314"/>
    <property type="project" value="UniProtKB"/>
</dbReference>
<dbReference type="GO" id="GO:0008792">
    <property type="term" value="F:arginine decarboxylase activity"/>
    <property type="evidence" value="ECO:0000315"/>
    <property type="project" value="TAIR"/>
</dbReference>
<dbReference type="GO" id="GO:0042803">
    <property type="term" value="F:protein homodimerization activity"/>
    <property type="evidence" value="ECO:0000353"/>
    <property type="project" value="UniProtKB"/>
</dbReference>
<dbReference type="GO" id="GO:0006527">
    <property type="term" value="P:arginine catabolic process"/>
    <property type="evidence" value="ECO:0007669"/>
    <property type="project" value="InterPro"/>
</dbReference>
<dbReference type="GO" id="GO:0006596">
    <property type="term" value="P:polyamine biosynthetic process"/>
    <property type="evidence" value="ECO:0000315"/>
    <property type="project" value="TAIR"/>
</dbReference>
<dbReference type="GO" id="GO:0009446">
    <property type="term" value="P:putrescine biosynthetic process"/>
    <property type="evidence" value="ECO:0000315"/>
    <property type="project" value="TAIR"/>
</dbReference>
<dbReference type="GO" id="GO:0009737">
    <property type="term" value="P:response to abscisic acid"/>
    <property type="evidence" value="ECO:0000270"/>
    <property type="project" value="TAIR"/>
</dbReference>
<dbReference type="GO" id="GO:0009409">
    <property type="term" value="P:response to cold"/>
    <property type="evidence" value="ECO:0000315"/>
    <property type="project" value="TAIR"/>
</dbReference>
<dbReference type="GO" id="GO:0009753">
    <property type="term" value="P:response to jasmonic acid"/>
    <property type="evidence" value="ECO:0000270"/>
    <property type="project" value="TAIR"/>
</dbReference>
<dbReference type="GO" id="GO:0006970">
    <property type="term" value="P:response to osmotic stress"/>
    <property type="evidence" value="ECO:0000315"/>
    <property type="project" value="TAIR"/>
</dbReference>
<dbReference type="GO" id="GO:0006979">
    <property type="term" value="P:response to oxidative stress"/>
    <property type="evidence" value="ECO:0000270"/>
    <property type="project" value="TAIR"/>
</dbReference>
<dbReference type="GO" id="GO:0009651">
    <property type="term" value="P:response to salt stress"/>
    <property type="evidence" value="ECO:0000315"/>
    <property type="project" value="TAIR"/>
</dbReference>
<dbReference type="GO" id="GO:0009611">
    <property type="term" value="P:response to wounding"/>
    <property type="evidence" value="ECO:0000270"/>
    <property type="project" value="TAIR"/>
</dbReference>
<dbReference type="GO" id="GO:0008295">
    <property type="term" value="P:spermidine biosynthetic process"/>
    <property type="evidence" value="ECO:0007669"/>
    <property type="project" value="UniProtKB-KW"/>
</dbReference>
<dbReference type="CDD" id="cd06830">
    <property type="entry name" value="PLPDE_III_ADC"/>
    <property type="match status" value="1"/>
</dbReference>
<dbReference type="FunFam" id="3.20.20.10:FF:000001">
    <property type="entry name" value="Biosynthetic arginine decarboxylase"/>
    <property type="match status" value="1"/>
</dbReference>
<dbReference type="Gene3D" id="1.20.58.930">
    <property type="match status" value="1"/>
</dbReference>
<dbReference type="Gene3D" id="3.20.20.10">
    <property type="entry name" value="Alanine racemase"/>
    <property type="match status" value="1"/>
</dbReference>
<dbReference type="Gene3D" id="2.40.37.10">
    <property type="entry name" value="Lyase, Ornithine Decarboxylase, Chain A, domain 1"/>
    <property type="match status" value="1"/>
</dbReference>
<dbReference type="InterPro" id="IPR009006">
    <property type="entry name" value="Ala_racemase/Decarboxylase_C"/>
</dbReference>
<dbReference type="InterPro" id="IPR002985">
    <property type="entry name" value="Arg_decrbxlase"/>
</dbReference>
<dbReference type="InterPro" id="IPR022657">
    <property type="entry name" value="De-COase2_CS"/>
</dbReference>
<dbReference type="InterPro" id="IPR022644">
    <property type="entry name" value="De-COase2_N"/>
</dbReference>
<dbReference type="InterPro" id="IPR022653">
    <property type="entry name" value="De-COase2_pyr-phos_BS"/>
</dbReference>
<dbReference type="InterPro" id="IPR000183">
    <property type="entry name" value="Orn/DAP/Arg_de-COase"/>
</dbReference>
<dbReference type="InterPro" id="IPR029066">
    <property type="entry name" value="PLP-binding_barrel"/>
</dbReference>
<dbReference type="NCBIfam" id="NF003763">
    <property type="entry name" value="PRK05354.1"/>
    <property type="match status" value="1"/>
</dbReference>
<dbReference type="NCBIfam" id="TIGR01273">
    <property type="entry name" value="speA"/>
    <property type="match status" value="1"/>
</dbReference>
<dbReference type="PANTHER" id="PTHR43295">
    <property type="entry name" value="ARGININE DECARBOXYLASE"/>
    <property type="match status" value="1"/>
</dbReference>
<dbReference type="PANTHER" id="PTHR43295:SF1">
    <property type="entry name" value="ARGININE DECARBOXYLASE 1, CHLOROPLASTIC-RELATED"/>
    <property type="match status" value="1"/>
</dbReference>
<dbReference type="Pfam" id="PF02784">
    <property type="entry name" value="Orn_Arg_deC_N"/>
    <property type="match status" value="1"/>
</dbReference>
<dbReference type="PIRSF" id="PIRSF001336">
    <property type="entry name" value="Arg_decrbxlase"/>
    <property type="match status" value="1"/>
</dbReference>
<dbReference type="PRINTS" id="PR01180">
    <property type="entry name" value="ARGDCRBXLASE"/>
</dbReference>
<dbReference type="PRINTS" id="PR01179">
    <property type="entry name" value="ODADCRBXLASE"/>
</dbReference>
<dbReference type="SUPFAM" id="SSF51419">
    <property type="entry name" value="PLP-binding barrel"/>
    <property type="match status" value="1"/>
</dbReference>
<dbReference type="PROSITE" id="PS00878">
    <property type="entry name" value="ODR_DC_2_1"/>
    <property type="match status" value="1"/>
</dbReference>
<dbReference type="PROSITE" id="PS00879">
    <property type="entry name" value="ODR_DC_2_2"/>
    <property type="match status" value="1"/>
</dbReference>
<comment type="function">
    <text evidence="5 6 7 8 9 10">Required for the biosynthesis of putrescine. Catalyzes the first step of polyamine (PA) biosynthesis to produce putrescine from arginine (PubMed:14684170, PubMed:15733873, PubMed:16045477, PubMed:25409942). Is a major contributor to basal arginine decarboxylase (ADC) activity and putrescine biosynthesis (PubMed:25409942). Accumulation of putrescine plays a positive role in salt stress tolerance (PubMed:14684170). Accumulation of putrescine plays a positive role in freezing tolerance (PubMed:18701673). Production of PA is essential for normal seed development (PubMed:15733873). Controls PA homeostasis which is crucial for normal plant growth and development (PubMed:27014322).</text>
</comment>
<comment type="catalytic activity">
    <reaction evidence="17">
        <text>L-arginine + H(+) = agmatine + CO2</text>
        <dbReference type="Rhea" id="RHEA:17641"/>
        <dbReference type="ChEBI" id="CHEBI:15378"/>
        <dbReference type="ChEBI" id="CHEBI:16526"/>
        <dbReference type="ChEBI" id="CHEBI:32682"/>
        <dbReference type="ChEBI" id="CHEBI:58145"/>
        <dbReference type="EC" id="4.1.1.19"/>
    </reaction>
</comment>
<comment type="cofactor">
    <cofactor>
        <name>pyridoxal 5'-phosphate</name>
        <dbReference type="ChEBI" id="CHEBI:597326"/>
    </cofactor>
</comment>
<comment type="cofactor">
    <cofactor>
        <name>Mg(2+)</name>
        <dbReference type="ChEBI" id="CHEBI:18420"/>
    </cofactor>
</comment>
<comment type="pathway">
    <text evidence="16">Amine and polyamine biosynthesis; agmatine biosynthesis; agmatine from L-arginine: step 1/1.</text>
</comment>
<comment type="subunit">
    <text evidence="11">Homodimer and heterodimer with ADC1.</text>
</comment>
<comment type="subcellular location">
    <subcellularLocation>
        <location evidence="11 12">Plastid</location>
        <location evidence="11 12">Chloroplast</location>
    </subcellularLocation>
    <subcellularLocation>
        <location evidence="11">Cytoplasm</location>
        <location evidence="11">Cytosol</location>
    </subcellularLocation>
    <text evidence="11">Localizes mainly in the chloroplast.</text>
</comment>
<comment type="induction">
    <text evidence="3 4 5 8 9">Induced by wounding, methyl jasmonate and abscisic acid (ABA) (PubMed:12428010). Induced by salt stress (PubMed:14684170). Induced by osmotic stress (PubMed:10481069). Induced by freezing (PubMed:18701673). Induced by the bacterial pathogen Pseudomonas viridiflava (PubMed:25409942).</text>
</comment>
<comment type="disruption phenotype">
    <text evidence="13">Increased levels of lateral root branching.</text>
</comment>
<comment type="miscellaneous">
    <text evidence="7">Plants over-expressing ADC2 accumulate very high levels of putrescine and exhibit dwarfism and late-flowering phenotypes.</text>
</comment>
<comment type="similarity">
    <text evidence="16">Belongs to the Orn/Lys/Arg decarboxylase class-II family. SpeA subfamily.</text>
</comment>
<keyword id="KW-0150">Chloroplast</keyword>
<keyword id="KW-0963">Cytoplasm</keyword>
<keyword id="KW-0210">Decarboxylase</keyword>
<keyword id="KW-0456">Lyase</keyword>
<keyword id="KW-0460">Magnesium</keyword>
<keyword id="KW-0934">Plastid</keyword>
<keyword id="KW-0661">Putrescine biosynthesis</keyword>
<keyword id="KW-0663">Pyridoxal phosphate</keyword>
<keyword id="KW-1185">Reference proteome</keyword>
<keyword id="KW-0745">Spermidine biosynthesis</keyword>
<keyword id="KW-0346">Stress response</keyword>
<evidence type="ECO:0000250" key="1"/>
<evidence type="ECO:0000256" key="2">
    <source>
        <dbReference type="SAM" id="MobiDB-lite"/>
    </source>
</evidence>
<evidence type="ECO:0000269" key="3">
    <source>
    </source>
</evidence>
<evidence type="ECO:0000269" key="4">
    <source>
    </source>
</evidence>
<evidence type="ECO:0000269" key="5">
    <source>
    </source>
</evidence>
<evidence type="ECO:0000269" key="6">
    <source>
    </source>
</evidence>
<evidence type="ECO:0000269" key="7">
    <source>
    </source>
</evidence>
<evidence type="ECO:0000269" key="8">
    <source>
    </source>
</evidence>
<evidence type="ECO:0000269" key="9">
    <source>
    </source>
</evidence>
<evidence type="ECO:0000269" key="10">
    <source>
    </source>
</evidence>
<evidence type="ECO:0000269" key="11">
    <source>
    </source>
</evidence>
<evidence type="ECO:0000269" key="12">
    <source>
    </source>
</evidence>
<evidence type="ECO:0000269" key="13">
    <source>
    </source>
</evidence>
<evidence type="ECO:0000303" key="14">
    <source>
    </source>
</evidence>
<evidence type="ECO:0000303" key="15">
    <source>
    </source>
</evidence>
<evidence type="ECO:0000305" key="16"/>
<evidence type="ECO:0000305" key="17">
    <source>
    </source>
</evidence>
<evidence type="ECO:0000312" key="18">
    <source>
        <dbReference type="Araport" id="AT4G34710"/>
    </source>
</evidence>
<evidence type="ECO:0000312" key="19">
    <source>
        <dbReference type="EMBL" id="CAA18850.1"/>
    </source>
</evidence>
<gene>
    <name evidence="14" type="primary">ADC2</name>
    <name evidence="15" type="synonym">SPE2</name>
    <name evidence="18" type="ordered locus">At4g34710</name>
    <name evidence="19" type="ORF">T4L20.290</name>
</gene>
<organism>
    <name type="scientific">Arabidopsis thaliana</name>
    <name type="common">Mouse-ear cress</name>
    <dbReference type="NCBI Taxonomy" id="3702"/>
    <lineage>
        <taxon>Eukaryota</taxon>
        <taxon>Viridiplantae</taxon>
        <taxon>Streptophyta</taxon>
        <taxon>Embryophyta</taxon>
        <taxon>Tracheophyta</taxon>
        <taxon>Spermatophyta</taxon>
        <taxon>Magnoliopsida</taxon>
        <taxon>eudicotyledons</taxon>
        <taxon>Gunneridae</taxon>
        <taxon>Pentapetalae</taxon>
        <taxon>rosids</taxon>
        <taxon>malvids</taxon>
        <taxon>Brassicales</taxon>
        <taxon>Brassicaceae</taxon>
        <taxon>Camelineae</taxon>
        <taxon>Arabidopsis</taxon>
    </lineage>
</organism>
<protein>
    <recommendedName>
        <fullName evidence="16">Arginine decarboxylase 2</fullName>
        <shortName evidence="16">ADC 2</shortName>
        <shortName evidence="16">ARGDC 2</shortName>
        <shortName evidence="14">AtADC2</shortName>
        <ecNumber evidence="17">4.1.1.19</ecNumber>
    </recommendedName>
    <alternativeName>
        <fullName evidence="16">ADC-N</fullName>
    </alternativeName>
</protein>
<reference key="1">
    <citation type="online journal article" date="1997" name="Plant Gene Register">
        <title>Isolation and characterization of a second arginine decarboxylase cDNA from Arabidopsis.</title>
        <authorList>
            <person name="Watson M.B."/>
            <person name="Yu W."/>
            <person name="Galloway G."/>
            <person name="Malmberg R.L."/>
        </authorList>
        <locator>PGR97-114</locator>
    </citation>
    <scope>NUCLEOTIDE SEQUENCE [MRNA]</scope>
    <source>
        <strain>cv. Columbia</strain>
    </source>
</reference>
<reference key="2">
    <citation type="journal article" date="1999" name="Nature">
        <title>Sequence and analysis of chromosome 4 of the plant Arabidopsis thaliana.</title>
        <authorList>
            <person name="Mayer K.F.X."/>
            <person name="Schueller C."/>
            <person name="Wambutt R."/>
            <person name="Murphy G."/>
            <person name="Volckaert G."/>
            <person name="Pohl T."/>
            <person name="Duesterhoeft A."/>
            <person name="Stiekema W."/>
            <person name="Entian K.-D."/>
            <person name="Terryn N."/>
            <person name="Harris B."/>
            <person name="Ansorge W."/>
            <person name="Brandt P."/>
            <person name="Grivell L.A."/>
            <person name="Rieger M."/>
            <person name="Weichselgartner M."/>
            <person name="de Simone V."/>
            <person name="Obermaier B."/>
            <person name="Mache R."/>
            <person name="Mueller M."/>
            <person name="Kreis M."/>
            <person name="Delseny M."/>
            <person name="Puigdomenech P."/>
            <person name="Watson M."/>
            <person name="Schmidtheini T."/>
            <person name="Reichert B."/>
            <person name="Portetelle D."/>
            <person name="Perez-Alonso M."/>
            <person name="Boutry M."/>
            <person name="Bancroft I."/>
            <person name="Vos P."/>
            <person name="Hoheisel J."/>
            <person name="Zimmermann W."/>
            <person name="Wedler H."/>
            <person name="Ridley P."/>
            <person name="Langham S.-A."/>
            <person name="McCullagh B."/>
            <person name="Bilham L."/>
            <person name="Robben J."/>
            <person name="van der Schueren J."/>
            <person name="Grymonprez B."/>
            <person name="Chuang Y.-J."/>
            <person name="Vandenbussche F."/>
            <person name="Braeken M."/>
            <person name="Weltjens I."/>
            <person name="Voet M."/>
            <person name="Bastiaens I."/>
            <person name="Aert R."/>
            <person name="Defoor E."/>
            <person name="Weitzenegger T."/>
            <person name="Bothe G."/>
            <person name="Ramsperger U."/>
            <person name="Hilbert H."/>
            <person name="Braun M."/>
            <person name="Holzer E."/>
            <person name="Brandt A."/>
            <person name="Peters S."/>
            <person name="van Staveren M."/>
            <person name="Dirkse W."/>
            <person name="Mooijman P."/>
            <person name="Klein Lankhorst R."/>
            <person name="Rose M."/>
            <person name="Hauf J."/>
            <person name="Koetter P."/>
            <person name="Berneiser S."/>
            <person name="Hempel S."/>
            <person name="Feldpausch M."/>
            <person name="Lamberth S."/>
            <person name="Van den Daele H."/>
            <person name="De Keyser A."/>
            <person name="Buysshaert C."/>
            <person name="Gielen J."/>
            <person name="Villarroel R."/>
            <person name="De Clercq R."/>
            <person name="van Montagu M."/>
            <person name="Rogers J."/>
            <person name="Cronin A."/>
            <person name="Quail M.A."/>
            <person name="Bray-Allen S."/>
            <person name="Clark L."/>
            <person name="Doggett J."/>
            <person name="Hall S."/>
            <person name="Kay M."/>
            <person name="Lennard N."/>
            <person name="McLay K."/>
            <person name="Mayes R."/>
            <person name="Pettett A."/>
            <person name="Rajandream M.A."/>
            <person name="Lyne M."/>
            <person name="Benes V."/>
            <person name="Rechmann S."/>
            <person name="Borkova D."/>
            <person name="Bloecker H."/>
            <person name="Scharfe M."/>
            <person name="Grimm M."/>
            <person name="Loehnert T.-H."/>
            <person name="Dose S."/>
            <person name="de Haan M."/>
            <person name="Maarse A.C."/>
            <person name="Schaefer M."/>
            <person name="Mueller-Auer S."/>
            <person name="Gabel C."/>
            <person name="Fuchs M."/>
            <person name="Fartmann B."/>
            <person name="Granderath K."/>
            <person name="Dauner D."/>
            <person name="Herzl A."/>
            <person name="Neumann S."/>
            <person name="Argiriou A."/>
            <person name="Vitale D."/>
            <person name="Liguori R."/>
            <person name="Piravandi E."/>
            <person name="Massenet O."/>
            <person name="Quigley F."/>
            <person name="Clabauld G."/>
            <person name="Muendlein A."/>
            <person name="Felber R."/>
            <person name="Schnabl S."/>
            <person name="Hiller R."/>
            <person name="Schmidt W."/>
            <person name="Lecharny A."/>
            <person name="Aubourg S."/>
            <person name="Chefdor F."/>
            <person name="Cooke R."/>
            <person name="Berger C."/>
            <person name="Monfort A."/>
            <person name="Casacuberta E."/>
            <person name="Gibbons T."/>
            <person name="Weber N."/>
            <person name="Vandenbol M."/>
            <person name="Bargues M."/>
            <person name="Terol J."/>
            <person name="Torres A."/>
            <person name="Perez-Perez A."/>
            <person name="Purnelle B."/>
            <person name="Bent E."/>
            <person name="Johnson S."/>
            <person name="Tacon D."/>
            <person name="Jesse T."/>
            <person name="Heijnen L."/>
            <person name="Schwarz S."/>
            <person name="Scholler P."/>
            <person name="Heber S."/>
            <person name="Francs P."/>
            <person name="Bielke C."/>
            <person name="Frishman D."/>
            <person name="Haase D."/>
            <person name="Lemcke K."/>
            <person name="Mewes H.-W."/>
            <person name="Stocker S."/>
            <person name="Zaccaria P."/>
            <person name="Bevan M."/>
            <person name="Wilson R.K."/>
            <person name="de la Bastide M."/>
            <person name="Habermann K."/>
            <person name="Parnell L."/>
            <person name="Dedhia N."/>
            <person name="Gnoj L."/>
            <person name="Schutz K."/>
            <person name="Huang E."/>
            <person name="Spiegel L."/>
            <person name="Sekhon M."/>
            <person name="Murray J."/>
            <person name="Sheet P."/>
            <person name="Cordes M."/>
            <person name="Abu-Threideh J."/>
            <person name="Stoneking T."/>
            <person name="Kalicki J."/>
            <person name="Graves T."/>
            <person name="Harmon G."/>
            <person name="Edwards J."/>
            <person name="Latreille P."/>
            <person name="Courtney L."/>
            <person name="Cloud J."/>
            <person name="Abbott A."/>
            <person name="Scott K."/>
            <person name="Johnson D."/>
            <person name="Minx P."/>
            <person name="Bentley D."/>
            <person name="Fulton B."/>
            <person name="Miller N."/>
            <person name="Greco T."/>
            <person name="Kemp K."/>
            <person name="Kramer J."/>
            <person name="Fulton L."/>
            <person name="Mardis E."/>
            <person name="Dante M."/>
            <person name="Pepin K."/>
            <person name="Hillier L.W."/>
            <person name="Nelson J."/>
            <person name="Spieth J."/>
            <person name="Ryan E."/>
            <person name="Andrews S."/>
            <person name="Geisel C."/>
            <person name="Layman D."/>
            <person name="Du H."/>
            <person name="Ali J."/>
            <person name="Berghoff A."/>
            <person name="Jones K."/>
            <person name="Drone K."/>
            <person name="Cotton M."/>
            <person name="Joshu C."/>
            <person name="Antonoiu B."/>
            <person name="Zidanic M."/>
            <person name="Strong C."/>
            <person name="Sun H."/>
            <person name="Lamar B."/>
            <person name="Yordan C."/>
            <person name="Ma P."/>
            <person name="Zhong J."/>
            <person name="Preston R."/>
            <person name="Vil D."/>
            <person name="Shekher M."/>
            <person name="Matero A."/>
            <person name="Shah R."/>
            <person name="Swaby I.K."/>
            <person name="O'Shaughnessy A."/>
            <person name="Rodriguez M."/>
            <person name="Hoffman J."/>
            <person name="Till S."/>
            <person name="Granat S."/>
            <person name="Shohdy N."/>
            <person name="Hasegawa A."/>
            <person name="Hameed A."/>
            <person name="Lodhi M."/>
            <person name="Johnson A."/>
            <person name="Chen E."/>
            <person name="Marra M.A."/>
            <person name="Martienssen R."/>
            <person name="McCombie W.R."/>
        </authorList>
    </citation>
    <scope>NUCLEOTIDE SEQUENCE [LARGE SCALE GENOMIC DNA]</scope>
    <source>
        <strain>cv. Columbia</strain>
    </source>
</reference>
<reference key="3">
    <citation type="journal article" date="2017" name="Plant J.">
        <title>Araport11: a complete reannotation of the Arabidopsis thaliana reference genome.</title>
        <authorList>
            <person name="Cheng C.Y."/>
            <person name="Krishnakumar V."/>
            <person name="Chan A.P."/>
            <person name="Thibaud-Nissen F."/>
            <person name="Schobel S."/>
            <person name="Town C.D."/>
        </authorList>
    </citation>
    <scope>GENOME REANNOTATION</scope>
    <source>
        <strain>cv. Columbia</strain>
    </source>
</reference>
<reference key="4">
    <citation type="journal article" date="2003" name="Science">
        <title>Empirical analysis of transcriptional activity in the Arabidopsis genome.</title>
        <authorList>
            <person name="Yamada K."/>
            <person name="Lim J."/>
            <person name="Dale J.M."/>
            <person name="Chen H."/>
            <person name="Shinn P."/>
            <person name="Palm C.J."/>
            <person name="Southwick A.M."/>
            <person name="Wu H.C."/>
            <person name="Kim C.J."/>
            <person name="Nguyen M."/>
            <person name="Pham P.K."/>
            <person name="Cheuk R.F."/>
            <person name="Karlin-Newmann G."/>
            <person name="Liu S.X."/>
            <person name="Lam B."/>
            <person name="Sakano H."/>
            <person name="Wu T."/>
            <person name="Yu G."/>
            <person name="Miranda M."/>
            <person name="Quach H.L."/>
            <person name="Tripp M."/>
            <person name="Chang C.H."/>
            <person name="Lee J.M."/>
            <person name="Toriumi M.J."/>
            <person name="Chan M.M."/>
            <person name="Tang C.C."/>
            <person name="Onodera C.S."/>
            <person name="Deng J.M."/>
            <person name="Akiyama K."/>
            <person name="Ansari Y."/>
            <person name="Arakawa T."/>
            <person name="Banh J."/>
            <person name="Banno F."/>
            <person name="Bowser L."/>
            <person name="Brooks S.Y."/>
            <person name="Carninci P."/>
            <person name="Chao Q."/>
            <person name="Choy N."/>
            <person name="Enju A."/>
            <person name="Goldsmith A.D."/>
            <person name="Gurjal M."/>
            <person name="Hansen N.F."/>
            <person name="Hayashizaki Y."/>
            <person name="Johnson-Hopson C."/>
            <person name="Hsuan V.W."/>
            <person name="Iida K."/>
            <person name="Karnes M."/>
            <person name="Khan S."/>
            <person name="Koesema E."/>
            <person name="Ishida J."/>
            <person name="Jiang P.X."/>
            <person name="Jones T."/>
            <person name="Kawai J."/>
            <person name="Kamiya A."/>
            <person name="Meyers C."/>
            <person name="Nakajima M."/>
            <person name="Narusaka M."/>
            <person name="Seki M."/>
            <person name="Sakurai T."/>
            <person name="Satou M."/>
            <person name="Tamse R."/>
            <person name="Vaysberg M."/>
            <person name="Wallender E.K."/>
            <person name="Wong C."/>
            <person name="Yamamura Y."/>
            <person name="Yuan S."/>
            <person name="Shinozaki K."/>
            <person name="Davis R.W."/>
            <person name="Theologis A."/>
            <person name="Ecker J.R."/>
        </authorList>
    </citation>
    <scope>NUCLEOTIDE SEQUENCE [LARGE SCALE MRNA]</scope>
    <source>
        <strain>cv. Columbia</strain>
    </source>
</reference>
<reference key="5">
    <citation type="journal article" date="1998" name="Plant J.">
        <title>Arginine decarboxylase (polyamine synthesis) mutants of Arabidopsis thaliana exhibit altered root growth.</title>
        <authorList>
            <person name="Watson M.B."/>
            <person name="Emory K.K."/>
            <person name="Piatak R.M."/>
            <person name="Malmberg R.L."/>
        </authorList>
    </citation>
    <scope>DISRUPTION PHENOTYPE</scope>
</reference>
<reference key="6">
    <citation type="journal article" date="1999" name="FEBS Lett.">
        <title>Arabidopsis knockout mutation of ADC2 gene reveals inducibility by osmotic stress.</title>
        <authorList>
            <person name="Soyka S."/>
            <person name="Heyer A.G."/>
        </authorList>
    </citation>
    <scope>INDUCTION BY OSMOTIC STRESS</scope>
</reference>
<reference key="7">
    <citation type="journal article" date="2002" name="Plant Physiol.">
        <title>Induction of the arginine decarboxylase ADC2 gene provides evidence for the involvement of polyamines in the wound response in Arabidopsis.</title>
        <authorList>
            <person name="Perez-Amador M.A."/>
            <person name="Leon J."/>
            <person name="Green P.J."/>
            <person name="Carbonell J."/>
        </authorList>
    </citation>
    <scope>INDUCTION</scope>
</reference>
<reference key="8">
    <citation type="journal article" date="2004" name="Biochem. Biophys. Res. Commun.">
        <title>Arabidopsis stress-inducible gene for arginine decarboxylase AtADC2 is required for accumulation of putrescine in salt tolerance.</title>
        <authorList>
            <person name="Urano K."/>
            <person name="Yoshiba Y."/>
            <person name="Nanjo T."/>
            <person name="Ito T."/>
            <person name="Yamaguchi-Shinozaki K."/>
            <person name="Shinozaki K."/>
        </authorList>
    </citation>
    <scope>FUNCTION</scope>
    <scope>CATALYTIC ACTIVITY</scope>
    <scope>INDUCTION BY SALT STRESS</scope>
</reference>
<reference key="9">
    <citation type="journal article" date="2005" name="FEBS Lett.">
        <title>Arabidopsis ADC genes involved in polyamine biosynthesis are essential for seed development.</title>
        <authorList>
            <person name="Urano K."/>
            <person name="Hobo T."/>
            <person name="Shinozaki K."/>
        </authorList>
    </citation>
    <scope>FUNCTION</scope>
</reference>
<reference key="10">
    <citation type="journal article" date="2005" name="Plant J.">
        <title>Overexpression of ADC2 in Arabidopsis induces dwarfism and late-flowering through GA deficiency.</title>
        <authorList>
            <person name="Alcazar R."/>
            <person name="Garcia-Martinez J.L."/>
            <person name="Cuevas J.C."/>
            <person name="Tiburcio A.F."/>
            <person name="Altabella T."/>
        </authorList>
    </citation>
    <scope>FUNCTION</scope>
</reference>
<reference key="11">
    <citation type="journal article" date="2008" name="Plant Physiol.">
        <title>Putrescine is involved in Arabidopsis freezing tolerance and cold acclimation by regulating abscisic acid levels in response to low temperature.</title>
        <authorList>
            <person name="Cuevas J.C."/>
            <person name="Lopez-Cobollo R."/>
            <person name="Alcazar R."/>
            <person name="Zarza X."/>
            <person name="Koncz C."/>
            <person name="Altabella T."/>
            <person name="Salinas J."/>
            <person name="Tiburcio A.F."/>
            <person name="Ferrando A."/>
        </authorList>
    </citation>
    <scope>FUNCTION</scope>
    <scope>INDUCTION BY FREEZING</scope>
</reference>
<reference key="12">
    <citation type="journal article" date="2015" name="Plant Biol.">
        <title>Role of Arginine decarboxylase (ADC) in Arabidopsis thaliana defence against the pathogenic bacterium Pseudomonas viridiflava.</title>
        <authorList>
            <person name="Rossi F.R."/>
            <person name="Marina M."/>
            <person name="Pieckenstain F.L."/>
        </authorList>
    </citation>
    <scope>FUNCTION</scope>
    <scope>INDUCTION BY BACTERIAL PATHOGEN</scope>
</reference>
<reference key="13">
    <citation type="journal article" date="2016" name="Front. Plant Sci.">
        <title>Simultaneous silencing of two arginine decarboxylase genes alters development in Arabidopsis.</title>
        <authorList>
            <person name="Sanchez-Rangel D."/>
            <person name="Chavez-Martinez A.I."/>
            <person name="Rodriguez-Hernandez A.A."/>
            <person name="Maruri-Lopez I."/>
            <person name="Urano K."/>
            <person name="Shinozaki K."/>
            <person name="Jimenez-Bremont J.F."/>
        </authorList>
    </citation>
    <scope>FUNCTION</scope>
</reference>
<reference key="14">
    <citation type="journal article" date="2017" name="Biochem. Biophys. Res. Commun.">
        <title>Hetero- and homodimerization of Arabidopsis thaliana arginine decarboxylase AtADC1 and AtADC2.</title>
        <authorList>
            <person name="Maruri-Lopez I."/>
            <person name="Jimenez-Bremont J.F."/>
        </authorList>
    </citation>
    <scope>SUBUNIT</scope>
    <scope>SUBCELLULAR LOCATION</scope>
</reference>
<reference key="15">
    <citation type="journal article" date="2017" name="Plant Sci.">
        <title>Dual functioning of plant arginases provides a third route for putrescine synthesis.</title>
        <authorList>
            <person name="Patel J."/>
            <person name="Ariyaratne M."/>
            <person name="Ahmed S."/>
            <person name="Ge L."/>
            <person name="Phuntumart V."/>
            <person name="Kalinoski A."/>
            <person name="Morris P.F."/>
        </authorList>
    </citation>
    <scope>SUBCELLULAR LOCATION</scope>
</reference>
<name>SPE2_ARATH</name>
<proteinExistence type="evidence at protein level"/>
<sequence length="711" mass="77219">MPALACVDTSFVPPAYAFSDTAGDVFIPASSPTSAAVVVDRWSPSLSSSLYRIDGWGAPYFIANSSGNISVRPHGSETLPHQDIDLLKIVKKVTGPKSSGGLGLQLPLIVRFPDVLKNRLECLQSAFDYAIKSQGYDSHYQGVYPVKCNQDRFVVEDIVKFGSSFRFGLEAGSKPEILLAMSCLCKGSPDAFLVCNGFKDAEYISLALLGRKLALNTVIVLEQEEELDLVIELSQKMNVRPVIGLRAKLRTKHSGHFGSTSGEKGKFGLTTTQIVRVVRKLRQSGMLDCLQLLHFHIGSQIPSTSLLSDGVAEAAQLYCELVRLGAHMKVIDIGGGLGIDYDGSKSGESDLSVAYSLEEYAEAVVASVRVVCDRSSVKHPVICSESGRAIVSHHSVLIFEAVSADKPMVHQATPGDIQFLLEGNEEARANYEDLYAAVMRGDHESCLLYVDQLKQRCVEGFKEGVLSIEQLASVDGLCEWVLKAIGASDPVHTYNINLSVFTSIPDLWGIDQLFPIVPIHKLDQRPGARGILSDLTCDSDGKINKFIGGESSLPLHELDKNGSGGRYFLGMFLGGAYEEALGGVHNLFGGPSVVRVSQSDGPHSFAVTRAVPGQSSADVLRAMQHEPELMFQTLKHRAEEMMHTKGGSEGENEEEEEDDEFNNVAASLDRSFHNMPYLATEQASPSNSLSAAISNLGFYYCDEDVYDYISA</sequence>
<accession>O23141</accession>
<accession>Q8H165</accession>
<accession>Q93ZG4</accession>
<feature type="chain" id="PRO_0000149947" description="Arginine decarboxylase 2">
    <location>
        <begin position="1"/>
        <end position="711"/>
    </location>
</feature>
<feature type="region of interest" description="Disordered" evidence="2">
    <location>
        <begin position="642"/>
        <end position="661"/>
    </location>
</feature>
<feature type="compositionally biased region" description="Acidic residues" evidence="2">
    <location>
        <begin position="650"/>
        <end position="661"/>
    </location>
</feature>
<feature type="binding site" evidence="1">
    <location>
        <begin position="331"/>
        <end position="341"/>
    </location>
    <ligand>
        <name>substrate</name>
    </ligand>
</feature>
<feature type="modified residue" description="N6-(pyridoxal phosphate)lysine" evidence="1">
    <location>
        <position position="147"/>
    </location>
</feature>
<feature type="sequence conflict" description="In Ref. 4; AAL09792." evidence="16" ref="4">
    <original>D</original>
    <variation>Y</variation>
    <location>
        <position position="54"/>
    </location>
</feature>
<feature type="sequence conflict" description="In Ref. 4; AAN31828." evidence="16" ref="4">
    <original>V</original>
    <variation>F</variation>
    <location>
        <position position="364"/>
    </location>
</feature>
<feature type="sequence conflict" description="In Ref. 4; AAN31828." evidence="16" ref="4">
    <original>F</original>
    <variation>Y</variation>
    <location>
        <position position="461"/>
    </location>
</feature>